<dbReference type="EMBL" id="CR936503">
    <property type="protein sequence ID" value="CAI54663.1"/>
    <property type="molecule type" value="Genomic_DNA"/>
</dbReference>
<dbReference type="RefSeq" id="WP_011374071.1">
    <property type="nucleotide sequence ID" value="NC_007576.1"/>
</dbReference>
<dbReference type="SMR" id="Q38YR4"/>
<dbReference type="STRING" id="314315.LCA_0362"/>
<dbReference type="KEGG" id="lsa:LCA_0362"/>
<dbReference type="eggNOG" id="COG0249">
    <property type="taxonomic scope" value="Bacteria"/>
</dbReference>
<dbReference type="HOGENOM" id="CLU_002472_1_3_9"/>
<dbReference type="OrthoDB" id="9802448at2"/>
<dbReference type="Proteomes" id="UP000002707">
    <property type="component" value="Chromosome"/>
</dbReference>
<dbReference type="GO" id="GO:0005829">
    <property type="term" value="C:cytosol"/>
    <property type="evidence" value="ECO:0007669"/>
    <property type="project" value="TreeGrafter"/>
</dbReference>
<dbReference type="GO" id="GO:0005524">
    <property type="term" value="F:ATP binding"/>
    <property type="evidence" value="ECO:0007669"/>
    <property type="project" value="UniProtKB-UniRule"/>
</dbReference>
<dbReference type="GO" id="GO:0140664">
    <property type="term" value="F:ATP-dependent DNA damage sensor activity"/>
    <property type="evidence" value="ECO:0007669"/>
    <property type="project" value="InterPro"/>
</dbReference>
<dbReference type="GO" id="GO:0003684">
    <property type="term" value="F:damaged DNA binding"/>
    <property type="evidence" value="ECO:0007669"/>
    <property type="project" value="UniProtKB-UniRule"/>
</dbReference>
<dbReference type="GO" id="GO:0030983">
    <property type="term" value="F:mismatched DNA binding"/>
    <property type="evidence" value="ECO:0007669"/>
    <property type="project" value="InterPro"/>
</dbReference>
<dbReference type="GO" id="GO:0006298">
    <property type="term" value="P:mismatch repair"/>
    <property type="evidence" value="ECO:0007669"/>
    <property type="project" value="UniProtKB-UniRule"/>
</dbReference>
<dbReference type="CDD" id="cd03284">
    <property type="entry name" value="ABC_MutS1"/>
    <property type="match status" value="1"/>
</dbReference>
<dbReference type="FunFam" id="1.10.1420.10:FF:000007">
    <property type="entry name" value="DNA mismatch repair protein MutS"/>
    <property type="match status" value="1"/>
</dbReference>
<dbReference type="FunFam" id="3.40.1170.10:FF:000001">
    <property type="entry name" value="DNA mismatch repair protein MutS"/>
    <property type="match status" value="1"/>
</dbReference>
<dbReference type="FunFam" id="3.40.50.300:FF:000896">
    <property type="entry name" value="DNA mismatch repair protein MutS"/>
    <property type="match status" value="1"/>
</dbReference>
<dbReference type="Gene3D" id="1.10.1420.10">
    <property type="match status" value="2"/>
</dbReference>
<dbReference type="Gene3D" id="3.40.1170.10">
    <property type="entry name" value="DNA repair protein MutS, domain I"/>
    <property type="match status" value="1"/>
</dbReference>
<dbReference type="Gene3D" id="3.30.420.110">
    <property type="entry name" value="MutS, connector domain"/>
    <property type="match status" value="1"/>
</dbReference>
<dbReference type="Gene3D" id="3.40.50.300">
    <property type="entry name" value="P-loop containing nucleotide triphosphate hydrolases"/>
    <property type="match status" value="1"/>
</dbReference>
<dbReference type="HAMAP" id="MF_00096">
    <property type="entry name" value="MutS"/>
    <property type="match status" value="1"/>
</dbReference>
<dbReference type="InterPro" id="IPR005748">
    <property type="entry name" value="DNA_mismatch_repair_MutS"/>
</dbReference>
<dbReference type="InterPro" id="IPR007695">
    <property type="entry name" value="DNA_mismatch_repair_MutS-lik_N"/>
</dbReference>
<dbReference type="InterPro" id="IPR017261">
    <property type="entry name" value="DNA_mismatch_repair_MutS/MSH"/>
</dbReference>
<dbReference type="InterPro" id="IPR000432">
    <property type="entry name" value="DNA_mismatch_repair_MutS_C"/>
</dbReference>
<dbReference type="InterPro" id="IPR007861">
    <property type="entry name" value="DNA_mismatch_repair_MutS_clamp"/>
</dbReference>
<dbReference type="InterPro" id="IPR007696">
    <property type="entry name" value="DNA_mismatch_repair_MutS_core"/>
</dbReference>
<dbReference type="InterPro" id="IPR016151">
    <property type="entry name" value="DNA_mismatch_repair_MutS_N"/>
</dbReference>
<dbReference type="InterPro" id="IPR036187">
    <property type="entry name" value="DNA_mismatch_repair_MutS_sf"/>
</dbReference>
<dbReference type="InterPro" id="IPR007860">
    <property type="entry name" value="DNA_mmatch_repair_MutS_con_dom"/>
</dbReference>
<dbReference type="InterPro" id="IPR045076">
    <property type="entry name" value="MutS"/>
</dbReference>
<dbReference type="InterPro" id="IPR036678">
    <property type="entry name" value="MutS_con_dom_sf"/>
</dbReference>
<dbReference type="InterPro" id="IPR027417">
    <property type="entry name" value="P-loop_NTPase"/>
</dbReference>
<dbReference type="NCBIfam" id="TIGR01070">
    <property type="entry name" value="mutS1"/>
    <property type="match status" value="1"/>
</dbReference>
<dbReference type="NCBIfam" id="NF003810">
    <property type="entry name" value="PRK05399.1"/>
    <property type="match status" value="1"/>
</dbReference>
<dbReference type="PANTHER" id="PTHR11361:SF34">
    <property type="entry name" value="DNA MISMATCH REPAIR PROTEIN MSH1, MITOCHONDRIAL"/>
    <property type="match status" value="1"/>
</dbReference>
<dbReference type="PANTHER" id="PTHR11361">
    <property type="entry name" value="DNA MISMATCH REPAIR PROTEIN MUTS FAMILY MEMBER"/>
    <property type="match status" value="1"/>
</dbReference>
<dbReference type="Pfam" id="PF01624">
    <property type="entry name" value="MutS_I"/>
    <property type="match status" value="1"/>
</dbReference>
<dbReference type="Pfam" id="PF05188">
    <property type="entry name" value="MutS_II"/>
    <property type="match status" value="1"/>
</dbReference>
<dbReference type="Pfam" id="PF05192">
    <property type="entry name" value="MutS_III"/>
    <property type="match status" value="1"/>
</dbReference>
<dbReference type="Pfam" id="PF05190">
    <property type="entry name" value="MutS_IV"/>
    <property type="match status" value="1"/>
</dbReference>
<dbReference type="Pfam" id="PF00488">
    <property type="entry name" value="MutS_V"/>
    <property type="match status" value="1"/>
</dbReference>
<dbReference type="PIRSF" id="PIRSF037677">
    <property type="entry name" value="DNA_mis_repair_Msh6"/>
    <property type="match status" value="1"/>
</dbReference>
<dbReference type="SMART" id="SM00534">
    <property type="entry name" value="MUTSac"/>
    <property type="match status" value="1"/>
</dbReference>
<dbReference type="SMART" id="SM00533">
    <property type="entry name" value="MUTSd"/>
    <property type="match status" value="1"/>
</dbReference>
<dbReference type="SUPFAM" id="SSF55271">
    <property type="entry name" value="DNA repair protein MutS, domain I"/>
    <property type="match status" value="1"/>
</dbReference>
<dbReference type="SUPFAM" id="SSF53150">
    <property type="entry name" value="DNA repair protein MutS, domain II"/>
    <property type="match status" value="1"/>
</dbReference>
<dbReference type="SUPFAM" id="SSF48334">
    <property type="entry name" value="DNA repair protein MutS, domain III"/>
    <property type="match status" value="1"/>
</dbReference>
<dbReference type="SUPFAM" id="SSF52540">
    <property type="entry name" value="P-loop containing nucleoside triphosphate hydrolases"/>
    <property type="match status" value="1"/>
</dbReference>
<dbReference type="PROSITE" id="PS00486">
    <property type="entry name" value="DNA_MISMATCH_REPAIR_2"/>
    <property type="match status" value="1"/>
</dbReference>
<evidence type="ECO:0000255" key="1">
    <source>
        <dbReference type="HAMAP-Rule" id="MF_00096"/>
    </source>
</evidence>
<reference key="1">
    <citation type="journal article" date="2005" name="Nat. Biotechnol.">
        <title>The complete genome sequence of the meat-borne lactic acid bacterium Lactobacillus sakei 23K.</title>
        <authorList>
            <person name="Chaillou S."/>
            <person name="Champomier-Verges M.-C."/>
            <person name="Cornet M."/>
            <person name="Crutz-Le Coq A.-M."/>
            <person name="Dudez A.-M."/>
            <person name="Martin V."/>
            <person name="Beaufils S."/>
            <person name="Darbon-Rongere E."/>
            <person name="Bossy R."/>
            <person name="Loux V."/>
            <person name="Zagorec M."/>
        </authorList>
    </citation>
    <scope>NUCLEOTIDE SEQUENCE [LARGE SCALE GENOMIC DNA]</scope>
    <source>
        <strain>23K</strain>
    </source>
</reference>
<organism>
    <name type="scientific">Latilactobacillus sakei subsp. sakei (strain 23K)</name>
    <name type="common">Lactobacillus sakei subsp. sakei</name>
    <dbReference type="NCBI Taxonomy" id="314315"/>
    <lineage>
        <taxon>Bacteria</taxon>
        <taxon>Bacillati</taxon>
        <taxon>Bacillota</taxon>
        <taxon>Bacilli</taxon>
        <taxon>Lactobacillales</taxon>
        <taxon>Lactobacillaceae</taxon>
        <taxon>Latilactobacillus</taxon>
    </lineage>
</organism>
<protein>
    <recommendedName>
        <fullName evidence="1">DNA mismatch repair protein MutS</fullName>
    </recommendedName>
</protein>
<comment type="function">
    <text evidence="1">This protein is involved in the repair of mismatches in DNA. It is possible that it carries out the mismatch recognition step. This protein has a weak ATPase activity.</text>
</comment>
<comment type="similarity">
    <text evidence="1">Belongs to the DNA mismatch repair MutS family.</text>
</comment>
<feature type="chain" id="PRO_0000224378" description="DNA mismatch repair protein MutS">
    <location>
        <begin position="1"/>
        <end position="867"/>
    </location>
</feature>
<feature type="binding site" evidence="1">
    <location>
        <begin position="609"/>
        <end position="616"/>
    </location>
    <ligand>
        <name>ATP</name>
        <dbReference type="ChEBI" id="CHEBI:30616"/>
    </ligand>
</feature>
<gene>
    <name evidence="1" type="primary">mutS</name>
    <name type="ordered locus">LCA_0362</name>
</gene>
<proteinExistence type="inferred from homology"/>
<keyword id="KW-0067">ATP-binding</keyword>
<keyword id="KW-0227">DNA damage</keyword>
<keyword id="KW-0234">DNA repair</keyword>
<keyword id="KW-0238">DNA-binding</keyword>
<keyword id="KW-0547">Nucleotide-binding</keyword>
<keyword id="KW-1185">Reference proteome</keyword>
<name>MUTS_LATSS</name>
<accession>Q38YR4</accession>
<sequence length="867" mass="96749">MPQKTKETPMMAQYQKVKDQYPDAFLFYRLGDFYELFNDDAVKASQLLELTLTARNKNAADPIPMCGVPHHAAQNYIDILVDQGYKVAICEQMEDPKTAKGMVKREVVQLVTPGTVMDEKAGHAKQNNYLTAVVAQGDQFGFAYTDLSTGEMKVSQISSLDVLLNEMLSLQTKEVVVNHDVPSEVVQAFVQQQILVSYQDEGADTAEVSFVSQNISQPLALAVIKQLVVYLATTQKRHLGHLQRAQAYEPSQYLKLDHSAKMNLELTASLRTGHKSGTLLWLLDETKTAMGGRLLKQWLERPLLDLNQIKNRQNQVASFLQHYFERTNLQEALTKVYDLERLAGRVAFGSVNGRDLIQLKTSLEQIPKIKDVLTGINETQAFDQALTRLDPVDDVRTLIETAINPDSPISVTDGGIIQDGYDEQLDQYRNAMSNGKQWLAQLEAQEREATGIHNLKIGFNRVFGYYIEVTRANLSSLPEGRYERKQTLTNAERFITPELKEKEQLILEAEERSTALEYELFTQVREQVKLQIERLQTLAKGVAALDVLQSFAVVSESYHYVQPTLRTDSREIDLVDGRHPVVEKVLGRQKYIPNAVQMGKETDMLLITGPNMSGKSTYMRQLALTVIMAQMGCFVPAKSANLPVFDQIFTRIGAADDLISGQSTFMVEMMEANRAIMSATANSLILFDEIGRGTATYDGMALAQAIIEYIHDHVHAKTLFSTHYHELTALADTLTALRNVHVGAVEENGELVFLHKMLAGPADKSYGIHVAKLAGMPETLLQRADVILGQLEDKPKAPVQPATVAPAQPAAAAVEEQMALFEPEVAAPVDKKTDKVVAAIKNFDLMSATPLEALNQLYEWQKQLNKH</sequence>